<reference key="1">
    <citation type="submission" date="2008-10" db="EMBL/GenBank/DDBJ databases">
        <title>Genome sequence of Clostridium botulinum A2 Kyoto.</title>
        <authorList>
            <person name="Shrivastava S."/>
            <person name="Brinkac L.M."/>
            <person name="Brown J.L."/>
            <person name="Bruce D."/>
            <person name="Detter C.C."/>
            <person name="Johnson E.A."/>
            <person name="Munk C.A."/>
            <person name="Smith L.A."/>
            <person name="Smith T.J."/>
            <person name="Sutton G."/>
            <person name="Brettin T.S."/>
        </authorList>
    </citation>
    <scope>NUCLEOTIDE SEQUENCE [LARGE SCALE GENOMIC DNA]</scope>
    <source>
        <strain>Kyoto / Type A2</strain>
    </source>
</reference>
<organism>
    <name type="scientific">Clostridium botulinum (strain Kyoto / Type A2)</name>
    <dbReference type="NCBI Taxonomy" id="536232"/>
    <lineage>
        <taxon>Bacteria</taxon>
        <taxon>Bacillati</taxon>
        <taxon>Bacillota</taxon>
        <taxon>Clostridia</taxon>
        <taxon>Eubacteriales</taxon>
        <taxon>Clostridiaceae</taxon>
        <taxon>Clostridium</taxon>
    </lineage>
</organism>
<name>OTC_CLOBJ</name>
<protein>
    <recommendedName>
        <fullName evidence="2">Ornithine carbamoyltransferase</fullName>
        <shortName evidence="2">OTCase</shortName>
        <ecNumber evidence="2">2.1.3.3</ecNumber>
    </recommendedName>
</protein>
<dbReference type="EC" id="2.1.3.3" evidence="2"/>
<dbReference type="EMBL" id="CP001581">
    <property type="protein sequence ID" value="ACO84267.1"/>
    <property type="molecule type" value="Genomic_DNA"/>
</dbReference>
<dbReference type="SMR" id="C1FTE9"/>
<dbReference type="KEGG" id="cby:CLM_2900"/>
<dbReference type="eggNOG" id="COG0078">
    <property type="taxonomic scope" value="Bacteria"/>
</dbReference>
<dbReference type="HOGENOM" id="CLU_043846_3_1_9"/>
<dbReference type="UniPathway" id="UPA00254">
    <property type="reaction ID" value="UER00365"/>
</dbReference>
<dbReference type="Proteomes" id="UP000001374">
    <property type="component" value="Chromosome"/>
</dbReference>
<dbReference type="GO" id="GO:0005737">
    <property type="term" value="C:cytoplasm"/>
    <property type="evidence" value="ECO:0007669"/>
    <property type="project" value="UniProtKB-SubCell"/>
</dbReference>
<dbReference type="GO" id="GO:0016597">
    <property type="term" value="F:amino acid binding"/>
    <property type="evidence" value="ECO:0007669"/>
    <property type="project" value="InterPro"/>
</dbReference>
<dbReference type="GO" id="GO:0004585">
    <property type="term" value="F:ornithine carbamoyltransferase activity"/>
    <property type="evidence" value="ECO:0007669"/>
    <property type="project" value="UniProtKB-UniRule"/>
</dbReference>
<dbReference type="GO" id="GO:0042450">
    <property type="term" value="P:arginine biosynthetic process via ornithine"/>
    <property type="evidence" value="ECO:0007669"/>
    <property type="project" value="TreeGrafter"/>
</dbReference>
<dbReference type="GO" id="GO:0019547">
    <property type="term" value="P:arginine catabolic process to ornithine"/>
    <property type="evidence" value="ECO:0007669"/>
    <property type="project" value="UniProtKB-UniRule"/>
</dbReference>
<dbReference type="GO" id="GO:0019240">
    <property type="term" value="P:citrulline biosynthetic process"/>
    <property type="evidence" value="ECO:0007669"/>
    <property type="project" value="TreeGrafter"/>
</dbReference>
<dbReference type="FunFam" id="3.40.50.1370:FF:000004">
    <property type="entry name" value="Ornithine carbamoyltransferase"/>
    <property type="match status" value="1"/>
</dbReference>
<dbReference type="Gene3D" id="3.40.50.1370">
    <property type="entry name" value="Aspartate/ornithine carbamoyltransferase"/>
    <property type="match status" value="2"/>
</dbReference>
<dbReference type="HAMAP" id="MF_01109">
    <property type="entry name" value="OTCase"/>
    <property type="match status" value="1"/>
</dbReference>
<dbReference type="InterPro" id="IPR006132">
    <property type="entry name" value="Asp/Orn_carbamoyltranf_P-bd"/>
</dbReference>
<dbReference type="InterPro" id="IPR006130">
    <property type="entry name" value="Asp/Orn_carbamoylTrfase"/>
</dbReference>
<dbReference type="InterPro" id="IPR036901">
    <property type="entry name" value="Asp/Orn_carbamoylTrfase_sf"/>
</dbReference>
<dbReference type="InterPro" id="IPR006131">
    <property type="entry name" value="Asp_carbamoyltransf_Asp/Orn-bd"/>
</dbReference>
<dbReference type="InterPro" id="IPR002292">
    <property type="entry name" value="Orn/put_carbamltrans"/>
</dbReference>
<dbReference type="InterPro" id="IPR024904">
    <property type="entry name" value="OTCase_ArgI"/>
</dbReference>
<dbReference type="NCBIfam" id="TIGR00658">
    <property type="entry name" value="orni_carb_tr"/>
    <property type="match status" value="1"/>
</dbReference>
<dbReference type="NCBIfam" id="NF003286">
    <property type="entry name" value="PRK04284.1"/>
    <property type="match status" value="1"/>
</dbReference>
<dbReference type="PANTHER" id="PTHR45753:SF2">
    <property type="entry name" value="ORNITHINE CARBAMOYLTRANSFERASE"/>
    <property type="match status" value="1"/>
</dbReference>
<dbReference type="PANTHER" id="PTHR45753">
    <property type="entry name" value="ORNITHINE CARBAMOYLTRANSFERASE, MITOCHONDRIAL"/>
    <property type="match status" value="1"/>
</dbReference>
<dbReference type="Pfam" id="PF00185">
    <property type="entry name" value="OTCace"/>
    <property type="match status" value="1"/>
</dbReference>
<dbReference type="Pfam" id="PF02729">
    <property type="entry name" value="OTCace_N"/>
    <property type="match status" value="1"/>
</dbReference>
<dbReference type="PRINTS" id="PR00100">
    <property type="entry name" value="AOTCASE"/>
</dbReference>
<dbReference type="PRINTS" id="PR00102">
    <property type="entry name" value="OTCASE"/>
</dbReference>
<dbReference type="SUPFAM" id="SSF53671">
    <property type="entry name" value="Aspartate/ornithine carbamoyltransferase"/>
    <property type="match status" value="1"/>
</dbReference>
<dbReference type="PROSITE" id="PS00097">
    <property type="entry name" value="CARBAMOYLTRANSFERASE"/>
    <property type="match status" value="1"/>
</dbReference>
<gene>
    <name evidence="2" type="primary">arcB</name>
    <name type="ordered locus">CLM_2900</name>
</gene>
<proteinExistence type="inferred from homology"/>
<feature type="chain" id="PRO_1000163966" description="Ornithine carbamoyltransferase">
    <location>
        <begin position="1"/>
        <end position="333"/>
    </location>
</feature>
<feature type="binding site" evidence="2">
    <location>
        <begin position="56"/>
        <end position="59"/>
    </location>
    <ligand>
        <name>carbamoyl phosphate</name>
        <dbReference type="ChEBI" id="CHEBI:58228"/>
    </ligand>
</feature>
<feature type="binding site" evidence="2">
    <location>
        <position position="107"/>
    </location>
    <ligand>
        <name>carbamoyl phosphate</name>
        <dbReference type="ChEBI" id="CHEBI:58228"/>
    </ligand>
</feature>
<feature type="binding site" evidence="2">
    <location>
        <begin position="134"/>
        <end position="137"/>
    </location>
    <ligand>
        <name>carbamoyl phosphate</name>
        <dbReference type="ChEBI" id="CHEBI:58228"/>
    </ligand>
</feature>
<feature type="binding site" evidence="2">
    <location>
        <position position="167"/>
    </location>
    <ligand>
        <name>L-ornithine</name>
        <dbReference type="ChEBI" id="CHEBI:46911"/>
    </ligand>
</feature>
<feature type="binding site" evidence="2">
    <location>
        <position position="231"/>
    </location>
    <ligand>
        <name>L-ornithine</name>
        <dbReference type="ChEBI" id="CHEBI:46911"/>
    </ligand>
</feature>
<feature type="binding site" evidence="2">
    <location>
        <begin position="235"/>
        <end position="236"/>
    </location>
    <ligand>
        <name>L-ornithine</name>
        <dbReference type="ChEBI" id="CHEBI:46911"/>
    </ligand>
</feature>
<feature type="binding site" evidence="2">
    <location>
        <begin position="273"/>
        <end position="274"/>
    </location>
    <ligand>
        <name>carbamoyl phosphate</name>
        <dbReference type="ChEBI" id="CHEBI:58228"/>
    </ligand>
</feature>
<feature type="binding site" evidence="2">
    <location>
        <position position="318"/>
    </location>
    <ligand>
        <name>carbamoyl phosphate</name>
        <dbReference type="ChEBI" id="CHEBI:58228"/>
    </ligand>
</feature>
<comment type="function">
    <text evidence="1">Reversibly catalyzes the transfer of the carbamoyl group from carbamoyl phosphate (CP) to the N(epsilon) atom of ornithine (ORN) to produce L-citrulline.</text>
</comment>
<comment type="catalytic activity">
    <reaction evidence="2">
        <text>carbamoyl phosphate + L-ornithine = L-citrulline + phosphate + H(+)</text>
        <dbReference type="Rhea" id="RHEA:19513"/>
        <dbReference type="ChEBI" id="CHEBI:15378"/>
        <dbReference type="ChEBI" id="CHEBI:43474"/>
        <dbReference type="ChEBI" id="CHEBI:46911"/>
        <dbReference type="ChEBI" id="CHEBI:57743"/>
        <dbReference type="ChEBI" id="CHEBI:58228"/>
        <dbReference type="EC" id="2.1.3.3"/>
    </reaction>
</comment>
<comment type="pathway">
    <text evidence="2">Amino-acid degradation; L-arginine degradation via ADI pathway; carbamoyl phosphate from L-arginine: step 2/2.</text>
</comment>
<comment type="subcellular location">
    <subcellularLocation>
        <location evidence="2">Cytoplasm</location>
    </subcellularLocation>
</comment>
<comment type="similarity">
    <text evidence="2">Belongs to the aspartate/ornithine carbamoyltransferase superfamily. OTCase family.</text>
</comment>
<sequence>MFNLKNRNFLTLMDFTPKEINYFLDLARDLKRAKYTGTEVQRLKGKNIALIFEKASTRTRCAFEVGAKDQGAHVTYLGPTGSHIGKKESAADTARVLGRMYDGIEYRGFGQEIVETLAEYAGVPVWNGLTDEDHPTQILADFLTIREHFNKPLNEIKFAYVGDGANNMANALMIGAVKMGMDFRIVSPKEIPTDAALVAKCKEIAAGTGAKVTITDNIEEGVKGCDVLYTDVWVSMGEPDSVWESKIKLLTPYRVDMNMIKMTGNPDAKFMHCLPAFHDEETAVGKEIKEKYGLSEMEVSHELFESKYSIVFDEAENRMHTIKAVMVATLGDQ</sequence>
<accession>C1FTE9</accession>
<keyword id="KW-0056">Arginine metabolism</keyword>
<keyword id="KW-0963">Cytoplasm</keyword>
<keyword id="KW-0808">Transferase</keyword>
<evidence type="ECO:0000250" key="1"/>
<evidence type="ECO:0000255" key="2">
    <source>
        <dbReference type="HAMAP-Rule" id="MF_01109"/>
    </source>
</evidence>